<organism>
    <name type="scientific">Brucella suis (strain ATCC 23445 / NCTC 10510)</name>
    <dbReference type="NCBI Taxonomy" id="470137"/>
    <lineage>
        <taxon>Bacteria</taxon>
        <taxon>Pseudomonadati</taxon>
        <taxon>Pseudomonadota</taxon>
        <taxon>Alphaproteobacteria</taxon>
        <taxon>Hyphomicrobiales</taxon>
        <taxon>Brucellaceae</taxon>
        <taxon>Brucella/Ochrobactrum group</taxon>
        <taxon>Brucella</taxon>
    </lineage>
</organism>
<proteinExistence type="inferred from homology"/>
<dbReference type="EC" id="2.7.8.26" evidence="1"/>
<dbReference type="EMBL" id="CP000911">
    <property type="protein sequence ID" value="ABY37971.1"/>
    <property type="molecule type" value="Genomic_DNA"/>
</dbReference>
<dbReference type="RefSeq" id="WP_002963996.1">
    <property type="nucleotide sequence ID" value="NC_010169.1"/>
</dbReference>
<dbReference type="KEGG" id="bmt:BSUIS_A0904"/>
<dbReference type="HOGENOM" id="CLU_057426_1_0_5"/>
<dbReference type="UniPathway" id="UPA00148">
    <property type="reaction ID" value="UER00238"/>
</dbReference>
<dbReference type="Proteomes" id="UP000008545">
    <property type="component" value="Chromosome I"/>
</dbReference>
<dbReference type="GO" id="GO:0005886">
    <property type="term" value="C:plasma membrane"/>
    <property type="evidence" value="ECO:0007669"/>
    <property type="project" value="UniProtKB-SubCell"/>
</dbReference>
<dbReference type="GO" id="GO:0051073">
    <property type="term" value="F:adenosylcobinamide-GDP ribazoletransferase activity"/>
    <property type="evidence" value="ECO:0007669"/>
    <property type="project" value="UniProtKB-UniRule"/>
</dbReference>
<dbReference type="GO" id="GO:0008818">
    <property type="term" value="F:cobalamin 5'-phosphate synthase activity"/>
    <property type="evidence" value="ECO:0007669"/>
    <property type="project" value="UniProtKB-UniRule"/>
</dbReference>
<dbReference type="GO" id="GO:0009236">
    <property type="term" value="P:cobalamin biosynthetic process"/>
    <property type="evidence" value="ECO:0007669"/>
    <property type="project" value="UniProtKB-UniRule"/>
</dbReference>
<dbReference type="HAMAP" id="MF_00719">
    <property type="entry name" value="CobS"/>
    <property type="match status" value="1"/>
</dbReference>
<dbReference type="InterPro" id="IPR003805">
    <property type="entry name" value="CobS"/>
</dbReference>
<dbReference type="NCBIfam" id="TIGR00317">
    <property type="entry name" value="cobS"/>
    <property type="match status" value="1"/>
</dbReference>
<dbReference type="NCBIfam" id="NF001276">
    <property type="entry name" value="PRK00235.1-2"/>
    <property type="match status" value="1"/>
</dbReference>
<dbReference type="PANTHER" id="PTHR34148">
    <property type="entry name" value="ADENOSYLCOBINAMIDE-GDP RIBAZOLETRANSFERASE"/>
    <property type="match status" value="1"/>
</dbReference>
<dbReference type="PANTHER" id="PTHR34148:SF1">
    <property type="entry name" value="ADENOSYLCOBINAMIDE-GDP RIBAZOLETRANSFERASE"/>
    <property type="match status" value="1"/>
</dbReference>
<dbReference type="Pfam" id="PF02654">
    <property type="entry name" value="CobS"/>
    <property type="match status" value="1"/>
</dbReference>
<feature type="chain" id="PRO_1000083254" description="Adenosylcobinamide-GDP ribazoletransferase">
    <location>
        <begin position="1"/>
        <end position="260"/>
    </location>
</feature>
<feature type="transmembrane region" description="Helical" evidence="1">
    <location>
        <begin position="42"/>
        <end position="62"/>
    </location>
</feature>
<feature type="transmembrane region" description="Helical" evidence="1">
    <location>
        <begin position="64"/>
        <end position="84"/>
    </location>
</feature>
<feature type="transmembrane region" description="Helical" evidence="1">
    <location>
        <begin position="117"/>
        <end position="137"/>
    </location>
</feature>
<feature type="transmembrane region" description="Helical" evidence="1">
    <location>
        <begin position="144"/>
        <end position="164"/>
    </location>
</feature>
<feature type="transmembrane region" description="Helical" evidence="1">
    <location>
        <begin position="192"/>
        <end position="212"/>
    </location>
</feature>
<feature type="transmembrane region" description="Helical" evidence="1">
    <location>
        <begin position="214"/>
        <end position="234"/>
    </location>
</feature>
<feature type="transmembrane region" description="Helical" evidence="1">
    <location>
        <begin position="240"/>
        <end position="260"/>
    </location>
</feature>
<evidence type="ECO:0000255" key="1">
    <source>
        <dbReference type="HAMAP-Rule" id="MF_00719"/>
    </source>
</evidence>
<name>COBS_BRUSI</name>
<keyword id="KW-0997">Cell inner membrane</keyword>
<keyword id="KW-1003">Cell membrane</keyword>
<keyword id="KW-0169">Cobalamin biosynthesis</keyword>
<keyword id="KW-0460">Magnesium</keyword>
<keyword id="KW-0472">Membrane</keyword>
<keyword id="KW-0808">Transferase</keyword>
<keyword id="KW-0812">Transmembrane</keyword>
<keyword id="KW-1133">Transmembrane helix</keyword>
<sequence>MQRNGLIGDTIRSLGFLSRLPLPQGWFDNTDDSLPRNARAFPLAGGILGLLAGVALLIANAISLPPLAAALIAIGALAAMTGALHEDGLGDTADGFFGASTPDRRLDIMKDSRIGTFAALTLVIWTGVKASLLMAIIARAGAGYALLALIGTEAASRAGMLAFWHALPSARPGGLADSMGQPQWETVVCGCGLGLALLAIGFLPSGGMVALINALVLMTVVLFGFARLCMAKIGGQTGDTLGAAQQIGSLAALIGLVMAL</sequence>
<gene>
    <name evidence="1" type="primary">cobS</name>
    <name type="ordered locus">BSUIS_A0904</name>
</gene>
<comment type="function">
    <text evidence="1">Joins adenosylcobinamide-GDP and alpha-ribazole to generate adenosylcobalamin (Ado-cobalamin). Also synthesizes adenosylcobalamin 5'-phosphate from adenosylcobinamide-GDP and alpha-ribazole 5'-phosphate.</text>
</comment>
<comment type="catalytic activity">
    <reaction evidence="1">
        <text>alpha-ribazole + adenosylcob(III)inamide-GDP = adenosylcob(III)alamin + GMP + H(+)</text>
        <dbReference type="Rhea" id="RHEA:16049"/>
        <dbReference type="ChEBI" id="CHEBI:10329"/>
        <dbReference type="ChEBI" id="CHEBI:15378"/>
        <dbReference type="ChEBI" id="CHEBI:18408"/>
        <dbReference type="ChEBI" id="CHEBI:58115"/>
        <dbReference type="ChEBI" id="CHEBI:60487"/>
        <dbReference type="EC" id="2.7.8.26"/>
    </reaction>
</comment>
<comment type="catalytic activity">
    <reaction evidence="1">
        <text>alpha-ribazole 5'-phosphate + adenosylcob(III)inamide-GDP = adenosylcob(III)alamin 5'-phosphate + GMP + H(+)</text>
        <dbReference type="Rhea" id="RHEA:23560"/>
        <dbReference type="ChEBI" id="CHEBI:15378"/>
        <dbReference type="ChEBI" id="CHEBI:57918"/>
        <dbReference type="ChEBI" id="CHEBI:58115"/>
        <dbReference type="ChEBI" id="CHEBI:60487"/>
        <dbReference type="ChEBI" id="CHEBI:60493"/>
        <dbReference type="EC" id="2.7.8.26"/>
    </reaction>
</comment>
<comment type="cofactor">
    <cofactor evidence="1">
        <name>Mg(2+)</name>
        <dbReference type="ChEBI" id="CHEBI:18420"/>
    </cofactor>
</comment>
<comment type="pathway">
    <text evidence="1">Cofactor biosynthesis; adenosylcobalamin biosynthesis; adenosylcobalamin from cob(II)yrinate a,c-diamide: step 7/7.</text>
</comment>
<comment type="subcellular location">
    <subcellularLocation>
        <location evidence="1">Cell inner membrane</location>
        <topology evidence="1">Multi-pass membrane protein</topology>
    </subcellularLocation>
</comment>
<comment type="similarity">
    <text evidence="1">Belongs to the CobS family.</text>
</comment>
<reference key="1">
    <citation type="submission" date="2007-12" db="EMBL/GenBank/DDBJ databases">
        <title>Brucella suis ATCC 23445 whole genome shotgun sequencing project.</title>
        <authorList>
            <person name="Setubal J.C."/>
            <person name="Bowns C."/>
            <person name="Boyle S."/>
            <person name="Crasta O.R."/>
            <person name="Czar M.J."/>
            <person name="Dharmanolla C."/>
            <person name="Gillespie J.J."/>
            <person name="Kenyon R.W."/>
            <person name="Lu J."/>
            <person name="Mane S."/>
            <person name="Mohapatra S."/>
            <person name="Nagrani S."/>
            <person name="Purkayastha A."/>
            <person name="Rajasimha H.K."/>
            <person name="Shallom J.M."/>
            <person name="Shallom S."/>
            <person name="Shukla M."/>
            <person name="Snyder E.E."/>
            <person name="Sobral B.W."/>
            <person name="Wattam A.R."/>
            <person name="Will R."/>
            <person name="Williams K."/>
            <person name="Yoo H."/>
            <person name="Bruce D."/>
            <person name="Detter C."/>
            <person name="Munk C."/>
            <person name="Brettin T.S."/>
        </authorList>
    </citation>
    <scope>NUCLEOTIDE SEQUENCE [LARGE SCALE GENOMIC DNA]</scope>
    <source>
        <strain>ATCC 23445 / NCTC 10510</strain>
    </source>
</reference>
<accession>B0CLJ1</accession>
<protein>
    <recommendedName>
        <fullName evidence="1">Adenosylcobinamide-GDP ribazoletransferase</fullName>
        <ecNumber evidence="1">2.7.8.26</ecNumber>
    </recommendedName>
    <alternativeName>
        <fullName evidence="1">Cobalamin synthase</fullName>
    </alternativeName>
    <alternativeName>
        <fullName evidence="1">Cobalamin-5'-phosphate synthase</fullName>
    </alternativeName>
</protein>